<keyword id="KW-0560">Oxidoreductase</keyword>
<keyword id="KW-1185">Reference proteome</keyword>
<dbReference type="EMBL" id="AY548484">
    <property type="protein sequence ID" value="AAT09711.1"/>
    <property type="molecule type" value="Genomic_DNA"/>
</dbReference>
<dbReference type="RefSeq" id="YP_031630.1">
    <property type="nucleotide sequence ID" value="NC_005946.1"/>
</dbReference>
<dbReference type="SMR" id="Q6GZS4"/>
<dbReference type="KEGG" id="vg:2947831"/>
<dbReference type="Proteomes" id="UP000008770">
    <property type="component" value="Segment"/>
</dbReference>
<dbReference type="GO" id="GO:0016616">
    <property type="term" value="F:oxidoreductase activity, acting on the CH-OH group of donors, NAD or NADP as acceptor"/>
    <property type="evidence" value="ECO:0007669"/>
    <property type="project" value="InterPro"/>
</dbReference>
<dbReference type="GO" id="GO:0006694">
    <property type="term" value="P:steroid biosynthetic process"/>
    <property type="evidence" value="ECO:0007669"/>
    <property type="project" value="InterPro"/>
</dbReference>
<dbReference type="FunFam" id="3.40.50.720:FF:000495">
    <property type="entry name" value="3 hydroxysteroid dehydrogenase, putative"/>
    <property type="match status" value="1"/>
</dbReference>
<dbReference type="Gene3D" id="3.40.50.720">
    <property type="entry name" value="NAD(P)-binding Rossmann-like Domain"/>
    <property type="match status" value="1"/>
</dbReference>
<dbReference type="InterPro" id="IPR002225">
    <property type="entry name" value="3Beta_OHSteriod_DH/Estase"/>
</dbReference>
<dbReference type="InterPro" id="IPR050177">
    <property type="entry name" value="Lipid_A_modif_metabolic_enz"/>
</dbReference>
<dbReference type="InterPro" id="IPR036291">
    <property type="entry name" value="NAD(P)-bd_dom_sf"/>
</dbReference>
<dbReference type="PANTHER" id="PTHR43245">
    <property type="entry name" value="BIFUNCTIONAL POLYMYXIN RESISTANCE PROTEIN ARNA"/>
    <property type="match status" value="1"/>
</dbReference>
<dbReference type="PANTHER" id="PTHR43245:SF51">
    <property type="entry name" value="SHORT CHAIN DEHYDROGENASE_REDUCTASE FAMILY 42E, MEMBER 2"/>
    <property type="match status" value="1"/>
</dbReference>
<dbReference type="Pfam" id="PF01073">
    <property type="entry name" value="3Beta_HSD"/>
    <property type="match status" value="1"/>
</dbReference>
<dbReference type="SUPFAM" id="SSF51735">
    <property type="entry name" value="NAD(P)-binding Rossmann-fold domains"/>
    <property type="match status" value="1"/>
</dbReference>
<organism>
    <name type="scientific">Frog virus 3 (isolate Goorha)</name>
    <name type="common">FV-3</name>
    <dbReference type="NCBI Taxonomy" id="654924"/>
    <lineage>
        <taxon>Viruses</taxon>
        <taxon>Varidnaviria</taxon>
        <taxon>Bamfordvirae</taxon>
        <taxon>Nucleocytoviricota</taxon>
        <taxon>Megaviricetes</taxon>
        <taxon>Pimascovirales</taxon>
        <taxon>Iridoviridae</taxon>
        <taxon>Alphairidovirinae</taxon>
        <taxon>Ranavirus</taxon>
        <taxon>Frog virus 3</taxon>
    </lineage>
</organism>
<reference key="1">
    <citation type="journal article" date="2004" name="Virology">
        <title>Comparative genomic analyses of frog virus 3, type species of the genus Ranavirus (family Iridoviridae).</title>
        <authorList>
            <person name="Tan W.G."/>
            <person name="Barkman T.J."/>
            <person name="Gregory Chinchar V."/>
            <person name="Essani K."/>
        </authorList>
    </citation>
    <scope>NUCLEOTIDE SEQUENCE [LARGE SCALE GENOMIC DNA]</scope>
</reference>
<proteinExistence type="inferred from homology"/>
<evidence type="ECO:0000305" key="1"/>
<protein>
    <recommendedName>
        <fullName>Uncharacterized protein 052L</fullName>
    </recommendedName>
</protein>
<gene>
    <name type="ORF">FV3-052L</name>
</gene>
<organismHost>
    <name type="scientific">Dryophytes versicolor</name>
    <name type="common">chameleon treefrog</name>
    <dbReference type="NCBI Taxonomy" id="30343"/>
</organismHost>
<organismHost>
    <name type="scientific">Lithobates pipiens</name>
    <name type="common">Northern leopard frog</name>
    <name type="synonym">Rana pipiens</name>
    <dbReference type="NCBI Taxonomy" id="8404"/>
</organismHost>
<organismHost>
    <name type="scientific">Lithobates sylvaticus</name>
    <name type="common">Wood frog</name>
    <name type="synonym">Rana sylvatica</name>
    <dbReference type="NCBI Taxonomy" id="45438"/>
</organismHost>
<organismHost>
    <name type="scientific">Notophthalmus viridescens</name>
    <name type="common">Eastern newt</name>
    <name type="synonym">Triturus viridescens</name>
    <dbReference type="NCBI Taxonomy" id="8316"/>
</organismHost>
<comment type="similarity">
    <text evidence="1">Belongs to the 3-beta-HSD family.</text>
</comment>
<name>052L_FRG3G</name>
<sequence length="355" mass="39320">MVKYVVTGGCGFLGSHIVKCILKYAPEVTEVVAYDINISHIMTMWSSKLKVVRGDVMDVMALAKAVDGADVVIHTAGIVDVWYRHTDDEIYRVNVSGTKNVLMCCINAGVQVLVNTSSMEVVGPNTTSGVFVRGGERTPYNTVHDHVYPLSKDRAEKLVKHYTGVAAAPGMPALKTCSLRPTGIYGEGCDLLEKFFHDTVNAGNVAYGGSPPDSEHGRVYVGNVAWMHLLAARALLAGGESAHKVNGEAFFCYDDSPYMSYDAFNAELFEDRGFGYVYVPYWVMKPMAAYNDLKRKFLGCFGVKRSPILNSYTLALARTSFTVKTSKARRMFGYMPLYEWSEAKRRTKDWISTLK</sequence>
<feature type="chain" id="PRO_0000410499" description="Uncharacterized protein 052L">
    <location>
        <begin position="1"/>
        <end position="355"/>
    </location>
</feature>
<accession>Q6GZS4</accession>